<keyword id="KW-0067">ATP-binding</keyword>
<keyword id="KW-0963">Cytoplasm</keyword>
<keyword id="KW-0347">Helicase</keyword>
<keyword id="KW-0378">Hydrolase</keyword>
<keyword id="KW-0547">Nucleotide-binding</keyword>
<keyword id="KW-0694">RNA-binding</keyword>
<evidence type="ECO:0000255" key="1">
    <source>
        <dbReference type="HAMAP-Rule" id="MF_00661"/>
    </source>
</evidence>
<organism>
    <name type="scientific">Pseudomonas aeruginosa (strain UCBPP-PA14)</name>
    <dbReference type="NCBI Taxonomy" id="208963"/>
    <lineage>
        <taxon>Bacteria</taxon>
        <taxon>Pseudomonadati</taxon>
        <taxon>Pseudomonadota</taxon>
        <taxon>Gammaproteobacteria</taxon>
        <taxon>Pseudomonadales</taxon>
        <taxon>Pseudomonadaceae</taxon>
        <taxon>Pseudomonas</taxon>
    </lineage>
</organism>
<name>RHLB_PSEAB</name>
<accession>Q02S21</accession>
<sequence length="397" mass="44288">MVEPQEGKTRFHDFNLAPSLMHAIHDLGFPYCTPIQAQVLGFTLRGQDAIGRAQTGTGKTAAFLISIITQLLQTPPPKERYMGEPRALIIAPTRELVVQIAKDAAALTKYTGLNVMTFVGGMDFDKQLKQLEARFCDILVATPGRLLDFNQRGEVHLDMVEVMVLDEADRMLDMGFIPQVRQIIRQTPHKGERQTLLFSATFTDDVMNLAKQWTVDPAIVEIEPENVASDTVEQHVYAVAGSDKYKLLYNLVAQNNWERVMVFANRKDEVRRIEERLTKDGISAAQMSGDVPQHKRIRTLEGFREGKIRVLVATDVAGRGIHIDGISHVINFTLPEDPDDYVHRIGRTGRAGASGTSISFAGEDDAFALPPIEELLGRKITCEMPPAELLKPVPRKH</sequence>
<dbReference type="EC" id="3.6.4.13" evidence="1"/>
<dbReference type="EMBL" id="CP000438">
    <property type="protein sequence ID" value="ABJ13128.1"/>
    <property type="molecule type" value="Genomic_DNA"/>
</dbReference>
<dbReference type="SMR" id="Q02S21"/>
<dbReference type="KEGG" id="pau:PA14_14040"/>
<dbReference type="HOGENOM" id="CLU_003041_1_3_6"/>
<dbReference type="Proteomes" id="UP000000653">
    <property type="component" value="Chromosome"/>
</dbReference>
<dbReference type="GO" id="GO:0005829">
    <property type="term" value="C:cytosol"/>
    <property type="evidence" value="ECO:0007669"/>
    <property type="project" value="TreeGrafter"/>
</dbReference>
<dbReference type="GO" id="GO:0005524">
    <property type="term" value="F:ATP binding"/>
    <property type="evidence" value="ECO:0007669"/>
    <property type="project" value="UniProtKB-UniRule"/>
</dbReference>
<dbReference type="GO" id="GO:0016887">
    <property type="term" value="F:ATP hydrolysis activity"/>
    <property type="evidence" value="ECO:0007669"/>
    <property type="project" value="RHEA"/>
</dbReference>
<dbReference type="GO" id="GO:0003723">
    <property type="term" value="F:RNA binding"/>
    <property type="evidence" value="ECO:0007669"/>
    <property type="project" value="UniProtKB-UniRule"/>
</dbReference>
<dbReference type="GO" id="GO:0003724">
    <property type="term" value="F:RNA helicase activity"/>
    <property type="evidence" value="ECO:0007669"/>
    <property type="project" value="UniProtKB-UniRule"/>
</dbReference>
<dbReference type="GO" id="GO:0006401">
    <property type="term" value="P:RNA catabolic process"/>
    <property type="evidence" value="ECO:0007669"/>
    <property type="project" value="UniProtKB-UniRule"/>
</dbReference>
<dbReference type="CDD" id="cd00268">
    <property type="entry name" value="DEADc"/>
    <property type="match status" value="1"/>
</dbReference>
<dbReference type="CDD" id="cd18787">
    <property type="entry name" value="SF2_C_DEAD"/>
    <property type="match status" value="1"/>
</dbReference>
<dbReference type="Gene3D" id="3.40.50.300">
    <property type="entry name" value="P-loop containing nucleotide triphosphate hydrolases"/>
    <property type="match status" value="2"/>
</dbReference>
<dbReference type="HAMAP" id="MF_00661">
    <property type="entry name" value="DEAD_helicase_RhlB"/>
    <property type="match status" value="1"/>
</dbReference>
<dbReference type="InterPro" id="IPR011545">
    <property type="entry name" value="DEAD/DEAH_box_helicase_dom"/>
</dbReference>
<dbReference type="InterPro" id="IPR050079">
    <property type="entry name" value="DEAD_box_RNA_helicase"/>
</dbReference>
<dbReference type="InterPro" id="IPR014001">
    <property type="entry name" value="Helicase_ATP-bd"/>
</dbReference>
<dbReference type="InterPro" id="IPR001650">
    <property type="entry name" value="Helicase_C-like"/>
</dbReference>
<dbReference type="InterPro" id="IPR027417">
    <property type="entry name" value="P-loop_NTPase"/>
</dbReference>
<dbReference type="InterPro" id="IPR000629">
    <property type="entry name" value="RNA-helicase_DEAD-box_CS"/>
</dbReference>
<dbReference type="InterPro" id="IPR023554">
    <property type="entry name" value="RNA_helicase_ATP-dep_RhlB"/>
</dbReference>
<dbReference type="InterPro" id="IPR014014">
    <property type="entry name" value="RNA_helicase_DEAD_Q_motif"/>
</dbReference>
<dbReference type="NCBIfam" id="NF002340">
    <property type="entry name" value="PRK01297.1"/>
    <property type="match status" value="1"/>
</dbReference>
<dbReference type="PANTHER" id="PTHR47959:SF10">
    <property type="entry name" value="ATP-DEPENDENT RNA HELICASE RHLB"/>
    <property type="match status" value="1"/>
</dbReference>
<dbReference type="PANTHER" id="PTHR47959">
    <property type="entry name" value="ATP-DEPENDENT RNA HELICASE RHLE-RELATED"/>
    <property type="match status" value="1"/>
</dbReference>
<dbReference type="Pfam" id="PF00270">
    <property type="entry name" value="DEAD"/>
    <property type="match status" value="1"/>
</dbReference>
<dbReference type="Pfam" id="PF00271">
    <property type="entry name" value="Helicase_C"/>
    <property type="match status" value="1"/>
</dbReference>
<dbReference type="SMART" id="SM00487">
    <property type="entry name" value="DEXDc"/>
    <property type="match status" value="1"/>
</dbReference>
<dbReference type="SMART" id="SM00490">
    <property type="entry name" value="HELICc"/>
    <property type="match status" value="1"/>
</dbReference>
<dbReference type="SUPFAM" id="SSF52540">
    <property type="entry name" value="P-loop containing nucleoside triphosphate hydrolases"/>
    <property type="match status" value="1"/>
</dbReference>
<dbReference type="PROSITE" id="PS00039">
    <property type="entry name" value="DEAD_ATP_HELICASE"/>
    <property type="match status" value="1"/>
</dbReference>
<dbReference type="PROSITE" id="PS51192">
    <property type="entry name" value="HELICASE_ATP_BIND_1"/>
    <property type="match status" value="1"/>
</dbReference>
<dbReference type="PROSITE" id="PS51194">
    <property type="entry name" value="HELICASE_CTER"/>
    <property type="match status" value="1"/>
</dbReference>
<dbReference type="PROSITE" id="PS51195">
    <property type="entry name" value="Q_MOTIF"/>
    <property type="match status" value="1"/>
</dbReference>
<gene>
    <name evidence="1" type="primary">rhlB</name>
    <name type="ordered locus">PA14_14040</name>
</gene>
<feature type="chain" id="PRO_1000131299" description="ATP-dependent RNA helicase RhlB">
    <location>
        <begin position="1"/>
        <end position="397"/>
    </location>
</feature>
<feature type="domain" description="Helicase ATP-binding" evidence="1">
    <location>
        <begin position="40"/>
        <end position="220"/>
    </location>
</feature>
<feature type="domain" description="Helicase C-terminal" evidence="1">
    <location>
        <begin position="243"/>
        <end position="393"/>
    </location>
</feature>
<feature type="short sequence motif" description="Q motif">
    <location>
        <begin position="9"/>
        <end position="37"/>
    </location>
</feature>
<feature type="short sequence motif" description="DEAD box">
    <location>
        <begin position="166"/>
        <end position="169"/>
    </location>
</feature>
<feature type="binding site" evidence="1">
    <location>
        <begin position="53"/>
        <end position="60"/>
    </location>
    <ligand>
        <name>ATP</name>
        <dbReference type="ChEBI" id="CHEBI:30616"/>
    </ligand>
</feature>
<proteinExistence type="inferred from homology"/>
<reference key="1">
    <citation type="journal article" date="2006" name="Genome Biol.">
        <title>Genomic analysis reveals that Pseudomonas aeruginosa virulence is combinatorial.</title>
        <authorList>
            <person name="Lee D.G."/>
            <person name="Urbach J.M."/>
            <person name="Wu G."/>
            <person name="Liberati N.T."/>
            <person name="Feinbaum R.L."/>
            <person name="Miyata S."/>
            <person name="Diggins L.T."/>
            <person name="He J."/>
            <person name="Saucier M."/>
            <person name="Deziel E."/>
            <person name="Friedman L."/>
            <person name="Li L."/>
            <person name="Grills G."/>
            <person name="Montgomery K."/>
            <person name="Kucherlapati R."/>
            <person name="Rahme L.G."/>
            <person name="Ausubel F.M."/>
        </authorList>
    </citation>
    <scope>NUCLEOTIDE SEQUENCE [LARGE SCALE GENOMIC DNA]</scope>
    <source>
        <strain>UCBPP-PA14</strain>
    </source>
</reference>
<comment type="function">
    <text evidence="1">DEAD-box RNA helicase involved in RNA degradation. Has RNA-dependent ATPase activity and unwinds double-stranded RNA.</text>
</comment>
<comment type="catalytic activity">
    <reaction evidence="1">
        <text>ATP + H2O = ADP + phosphate + H(+)</text>
        <dbReference type="Rhea" id="RHEA:13065"/>
        <dbReference type="ChEBI" id="CHEBI:15377"/>
        <dbReference type="ChEBI" id="CHEBI:15378"/>
        <dbReference type="ChEBI" id="CHEBI:30616"/>
        <dbReference type="ChEBI" id="CHEBI:43474"/>
        <dbReference type="ChEBI" id="CHEBI:456216"/>
        <dbReference type="EC" id="3.6.4.13"/>
    </reaction>
</comment>
<comment type="subunit">
    <text evidence="1">Component of the RNA degradosome, which is a multiprotein complex involved in RNA processing and mRNA degradation.</text>
</comment>
<comment type="subcellular location">
    <subcellularLocation>
        <location evidence="1">Cytoplasm</location>
    </subcellularLocation>
</comment>
<comment type="similarity">
    <text evidence="1">Belongs to the DEAD box helicase family. RhlB subfamily.</text>
</comment>
<protein>
    <recommendedName>
        <fullName evidence="1">ATP-dependent RNA helicase RhlB</fullName>
        <ecNumber evidence="1">3.6.4.13</ecNumber>
    </recommendedName>
</protein>